<keyword id="KW-0119">Carbohydrate metabolism</keyword>
<keyword id="KW-0136">Cellulose degradation</keyword>
<keyword id="KW-0325">Glycoprotein</keyword>
<keyword id="KW-0326">Glycosidase</keyword>
<keyword id="KW-0378">Hydrolase</keyword>
<keyword id="KW-0624">Polysaccharide degradation</keyword>
<keyword id="KW-0964">Secreted</keyword>
<keyword id="KW-0732">Signal</keyword>
<dbReference type="EC" id="3.2.1.91"/>
<dbReference type="EMBL" id="AF156268">
    <property type="protein sequence ID" value="AAF04491.1"/>
    <property type="molecule type" value="Genomic_DNA"/>
</dbReference>
<dbReference type="EMBL" id="GQ281319">
    <property type="protein sequence ID" value="ACT65727.1"/>
    <property type="molecule type" value="Genomic_DNA"/>
</dbReference>
<dbReference type="SMR" id="Q9UVS9"/>
<dbReference type="CAZy" id="GH7">
    <property type="family name" value="Glycoside Hydrolase Family 7"/>
</dbReference>
<dbReference type="GlyCosmos" id="Q9UVS9">
    <property type="glycosylation" value="5 sites, No reported glycans"/>
</dbReference>
<dbReference type="PaxDb" id="5061-CADANGAP00006086"/>
<dbReference type="VEuPathDB" id="FungiDB:An07g09330"/>
<dbReference type="VEuPathDB" id="FungiDB:ASPNIDRAFT2_1164625"/>
<dbReference type="VEuPathDB" id="FungiDB:ATCC64974_49900"/>
<dbReference type="VEuPathDB" id="FungiDB:M747DRAFT_326184"/>
<dbReference type="eggNOG" id="ENOG502QPHV">
    <property type="taxonomic scope" value="Eukaryota"/>
</dbReference>
<dbReference type="GO" id="GO:0005576">
    <property type="term" value="C:extracellular region"/>
    <property type="evidence" value="ECO:0007669"/>
    <property type="project" value="UniProtKB-SubCell"/>
</dbReference>
<dbReference type="GO" id="GO:0016162">
    <property type="term" value="F:cellulose 1,4-beta-cellobiosidase activity"/>
    <property type="evidence" value="ECO:0007669"/>
    <property type="project" value="UniProtKB-EC"/>
</dbReference>
<dbReference type="GO" id="GO:0030245">
    <property type="term" value="P:cellulose catabolic process"/>
    <property type="evidence" value="ECO:0007669"/>
    <property type="project" value="UniProtKB-KW"/>
</dbReference>
<dbReference type="CDD" id="cd07999">
    <property type="entry name" value="GH7_CBH_EG"/>
    <property type="match status" value="1"/>
</dbReference>
<dbReference type="FunFam" id="2.70.100.10:FF:000001">
    <property type="entry name" value="Glucanase"/>
    <property type="match status" value="1"/>
</dbReference>
<dbReference type="Gene3D" id="2.70.100.10">
    <property type="entry name" value="Glycoside hydrolase, family 7, domain"/>
    <property type="match status" value="1"/>
</dbReference>
<dbReference type="InterPro" id="IPR013320">
    <property type="entry name" value="ConA-like_dom_sf"/>
</dbReference>
<dbReference type="InterPro" id="IPR001722">
    <property type="entry name" value="Glyco_hydro_7"/>
</dbReference>
<dbReference type="InterPro" id="IPR037019">
    <property type="entry name" value="Glyco_hydro_7_sf"/>
</dbReference>
<dbReference type="PANTHER" id="PTHR33753:SF6">
    <property type="entry name" value="1,4-BETA-D-GLUCAN CELLOBIOHYDROLASE A-RELATED"/>
    <property type="match status" value="1"/>
</dbReference>
<dbReference type="PANTHER" id="PTHR33753">
    <property type="entry name" value="1,4-BETA-D-GLUCAN CELLOBIOHYDROLASE B"/>
    <property type="match status" value="1"/>
</dbReference>
<dbReference type="Pfam" id="PF00840">
    <property type="entry name" value="Glyco_hydro_7"/>
    <property type="match status" value="1"/>
</dbReference>
<dbReference type="PRINTS" id="PR00734">
    <property type="entry name" value="GLHYDRLASE7"/>
</dbReference>
<dbReference type="SUPFAM" id="SSF49899">
    <property type="entry name" value="Concanavalin A-like lectins/glucanases"/>
    <property type="match status" value="1"/>
</dbReference>
<feature type="signal peptide" evidence="2">
    <location>
        <begin position="1"/>
        <end position="17"/>
    </location>
</feature>
<feature type="chain" id="PRO_5000056394" description="1,4-beta-D-glucan cellobiohydrolase A">
    <location>
        <begin position="18"/>
        <end position="452"/>
    </location>
</feature>
<feature type="active site" description="Nucleophile" evidence="1">
    <location>
        <position position="227"/>
    </location>
</feature>
<feature type="active site" description="Proton donor" evidence="1">
    <location>
        <position position="232"/>
    </location>
</feature>
<feature type="glycosylation site" description="N-linked (GlcNAc...) asparagine" evidence="2">
    <location>
        <position position="62"/>
    </location>
</feature>
<feature type="glycosylation site" description="N-linked (GlcNAc...) asparagine" evidence="2">
    <location>
        <position position="285"/>
    </location>
</feature>
<feature type="glycosylation site" description="N-linked (GlcNAc...) asparagine" evidence="2">
    <location>
        <position position="335"/>
    </location>
</feature>
<feature type="glycosylation site" description="N-linked (GlcNAc...) asparagine" evidence="2">
    <location>
        <position position="402"/>
    </location>
</feature>
<feature type="glycosylation site" description="N-linked (GlcNAc...) asparagine" evidence="2">
    <location>
        <position position="445"/>
    </location>
</feature>
<feature type="sequence conflict" description="In Ref. 2; ACT65727." evidence="5" ref="2">
    <original>V</original>
    <variation>I</variation>
    <location>
        <position position="101"/>
    </location>
</feature>
<feature type="sequence conflict" description="In Ref. 2; ACT65727." evidence="5" ref="2">
    <original>V</original>
    <variation>A</variation>
    <location>
        <position position="170"/>
    </location>
</feature>
<feature type="sequence conflict" description="In Ref. 2; ACT65727." evidence="5" ref="2">
    <original>E</original>
    <variation>D</variation>
    <location>
        <position position="359"/>
    </location>
</feature>
<protein>
    <recommendedName>
        <fullName>1,4-beta-D-glucan cellobiohydrolase A</fullName>
        <ecNumber>3.2.1.91</ecNumber>
    </recommendedName>
    <alternativeName>
        <fullName>Beta-glucancellobiohydrolase A</fullName>
    </alternativeName>
    <alternativeName>
        <fullName>Cellobiohydrolase D</fullName>
    </alternativeName>
    <alternativeName>
        <fullName>Exocellobiohydrolase A</fullName>
    </alternativeName>
    <alternativeName>
        <fullName>Exoglucanase A</fullName>
    </alternativeName>
</protein>
<comment type="function">
    <text evidence="4">The biological conversion of cellulose to glucose generally requires three types of hydrolytic enzymes: (1) Endoglucanases which cut internal beta-1,4-glucosidic bonds; (2) Exocellobiohydrolases that cut the disaccharide cellobiose from the non-reducing end of the cellulose polymer chain; (3) Beta-1,4-glucosidases which hydrolyze the cellobiose and other short cello-oligosaccharides to glucose.</text>
</comment>
<comment type="catalytic activity">
    <reaction>
        <text>Hydrolysis of (1-&gt;4)-beta-D-glucosidic linkages in cellulose and cellotetraose, releasing cellobiose from the non-reducing ends of the chains.</text>
        <dbReference type="EC" id="3.2.1.91"/>
    </reaction>
</comment>
<comment type="subcellular location">
    <subcellularLocation>
        <location evidence="5">Secreted</location>
    </subcellularLocation>
</comment>
<comment type="induction">
    <text evidence="3 4">Expression is under the control of the xylanolytic transcriptional activator xlnR.</text>
</comment>
<comment type="similarity">
    <text evidence="5">Belongs to the glycosyl hydrolase 7 (cellulase C) family.</text>
</comment>
<evidence type="ECO:0000250" key="1"/>
<evidence type="ECO:0000255" key="2"/>
<evidence type="ECO:0000269" key="3">
    <source>
    </source>
</evidence>
<evidence type="ECO:0000269" key="4">
    <source>
    </source>
</evidence>
<evidence type="ECO:0000305" key="5"/>
<organism>
    <name type="scientific">Aspergillus niger</name>
    <dbReference type="NCBI Taxonomy" id="5061"/>
    <lineage>
        <taxon>Eukaryota</taxon>
        <taxon>Fungi</taxon>
        <taxon>Dikarya</taxon>
        <taxon>Ascomycota</taxon>
        <taxon>Pezizomycotina</taxon>
        <taxon>Eurotiomycetes</taxon>
        <taxon>Eurotiomycetidae</taxon>
        <taxon>Eurotiales</taxon>
        <taxon>Aspergillaceae</taxon>
        <taxon>Aspergillus</taxon>
        <taxon>Aspergillus subgen. Circumdati</taxon>
    </lineage>
</organism>
<name>CBHA_ASPNG</name>
<proteinExistence type="evidence at transcript level"/>
<reference key="1">
    <citation type="journal article" date="1999" name="Appl. Environ. Microbiol.">
        <title>Two cellobiohydrolase-encoding genes from Aspergillus niger require D-xylose and the xylanolytic transcriptional activator XlnR for their expression.</title>
        <authorList>
            <person name="Gielkens M.M."/>
            <person name="Dekkers E."/>
            <person name="Visser J."/>
            <person name="de Graaff L.H."/>
        </authorList>
    </citation>
    <scope>NUCLEOTIDE SEQUENCE [GENOMIC DNA]</scope>
    <scope>INDUCTION</scope>
    <source>
        <strain>ATCC 9029 / NRRL 3 / CBS 120.49 / DSM 2466 / N400 / FGSC 732</strain>
    </source>
</reference>
<reference key="2">
    <citation type="submission" date="2009-06" db="EMBL/GenBank/DDBJ databases">
        <authorList>
            <person name="Hsing-Ren W."/>
            <person name="Trong-Rong Y."/>
        </authorList>
    </citation>
    <scope>NUCLEOTIDE SEQUENCE [GENOMIC DNA]</scope>
    <source>
        <strain>BCRC 31494</strain>
    </source>
</reference>
<reference key="3">
    <citation type="journal article" date="2004" name="Bioresour. Technol.">
        <title>Induction, production, repression, and de-repression of exoglucanase synthesis in Aspergillus niger.</title>
        <authorList>
            <person name="Hanif A."/>
            <person name="Yasmeen A."/>
            <person name="Rajoka M.I."/>
        </authorList>
    </citation>
    <scope>FUNCTION</scope>
    <scope>INDUCTION</scope>
</reference>
<accession>Q9UVS9</accession>
<accession>C7ENW1</accession>
<gene>
    <name type="primary">cbhA</name>
    <name type="synonym">celD</name>
</gene>
<sequence>MHQRALLFSALLTAVRAQQAGTLTEEVHPSLTWQKCTSEGSCTEQSGSVVIDSNWRWTHSVNDSTNCYTGNTWDATLCPDDETCAANCALDGADYESTYGVTTDGDSLTLKFVTGSNVGSRLYLMDTSDEGYQTFNLLDAEFTFDVDVSNLPCGLNGALYFTAMDADGGVSKYPANKAGAKYGTGYCDSQCPRDLKFIDGQANVDGWEPSSNNDNTGIGNHGSCCPEMDIWEANKISTALTPHPCDSSEQTMCEGNDCGGTYSDDRYGGTCDPDGCDFNPYRMGNDSFYGPGKTIDTGSKMTVVTQFITDGSGSLSEIKRYYVQNGNVIANADSNISGVTGNSITTDFCTAQKKAFGDEDIFAEHNGLAGISDAMSSMVLILSLWDDYYASMEWLDSDYPENATATDPGVARGTCDSESGVPATVEGAHPDSSVTFSNIKFGPINSTFSASA</sequence>